<organism>
    <name type="scientific">Bartonella tribocorum (strain CIP 105476 / IBS 506)</name>
    <dbReference type="NCBI Taxonomy" id="382640"/>
    <lineage>
        <taxon>Bacteria</taxon>
        <taxon>Pseudomonadati</taxon>
        <taxon>Pseudomonadota</taxon>
        <taxon>Alphaproteobacteria</taxon>
        <taxon>Hyphomicrobiales</taxon>
        <taxon>Bartonellaceae</taxon>
        <taxon>Bartonella</taxon>
    </lineage>
</organism>
<comment type="function">
    <text evidence="1">Involved in the biosynthesis of lipid A, a phosphorylated glycolipid that anchors the lipopolysaccharide to the outer membrane of the cell.</text>
</comment>
<comment type="catalytic activity">
    <reaction evidence="1">
        <text>a (3R)-hydroxyacyl-[ACP] + UDP-N-acetyl-alpha-D-glucosamine = a UDP-3-O-[(3R)-3-hydroxyacyl]-N-acetyl-alpha-D-glucosamine + holo-[ACP]</text>
        <dbReference type="Rhea" id="RHEA:67812"/>
        <dbReference type="Rhea" id="RHEA-COMP:9685"/>
        <dbReference type="Rhea" id="RHEA-COMP:9945"/>
        <dbReference type="ChEBI" id="CHEBI:57705"/>
        <dbReference type="ChEBI" id="CHEBI:64479"/>
        <dbReference type="ChEBI" id="CHEBI:78827"/>
        <dbReference type="ChEBI" id="CHEBI:173225"/>
        <dbReference type="EC" id="2.3.1.129"/>
    </reaction>
</comment>
<comment type="pathway">
    <text evidence="1">Glycolipid biosynthesis; lipid IV(A) biosynthesis; lipid IV(A) from (3R)-3-hydroxytetradecanoyl-[acyl-carrier-protein] and UDP-N-acetyl-alpha-D-glucosamine: step 1/6.</text>
</comment>
<comment type="subunit">
    <text evidence="1">Homotrimer.</text>
</comment>
<comment type="subcellular location">
    <subcellularLocation>
        <location evidence="1">Cytoplasm</location>
    </subcellularLocation>
</comment>
<comment type="similarity">
    <text evidence="1">Belongs to the transferase hexapeptide repeat family. LpxA subfamily.</text>
</comment>
<keyword id="KW-0012">Acyltransferase</keyword>
<keyword id="KW-0963">Cytoplasm</keyword>
<keyword id="KW-0441">Lipid A biosynthesis</keyword>
<keyword id="KW-0444">Lipid biosynthesis</keyword>
<keyword id="KW-0443">Lipid metabolism</keyword>
<keyword id="KW-0677">Repeat</keyword>
<keyword id="KW-0808">Transferase</keyword>
<gene>
    <name evidence="1" type="primary">lpxA</name>
    <name type="ordered locus">BT_0921</name>
</gene>
<feature type="chain" id="PRO_1000080204" description="Acyl-[acyl-carrier-protein]--UDP-N-acetylglucosamine O-acyltransferase">
    <location>
        <begin position="1"/>
        <end position="270"/>
    </location>
</feature>
<reference key="1">
    <citation type="journal article" date="2007" name="Nat. Genet.">
        <title>Genomic analysis of Bartonella identifies type IV secretion systems as host adaptability factors.</title>
        <authorList>
            <person name="Saenz H.L."/>
            <person name="Engel P."/>
            <person name="Stoeckli M.C."/>
            <person name="Lanz C."/>
            <person name="Raddatz G."/>
            <person name="Vayssier-Taussat M."/>
            <person name="Birtles R."/>
            <person name="Schuster S.C."/>
            <person name="Dehio C."/>
        </authorList>
    </citation>
    <scope>NUCLEOTIDE SEQUENCE [LARGE SCALE GENOMIC DNA]</scope>
    <source>
        <strain>CIP 105476 / IBS 506</strain>
    </source>
</reference>
<proteinExistence type="inferred from homology"/>
<protein>
    <recommendedName>
        <fullName evidence="1">Acyl-[acyl-carrier-protein]--UDP-N-acetylglucosamine O-acyltransferase</fullName>
        <shortName evidence="1">UDP-N-acetylglucosamine acyltransferase</shortName>
        <ecNumber evidence="1">2.3.1.129</ecNumber>
    </recommendedName>
</protein>
<sequence>MSGTKIHPTALVEKGAQLGENVRVGPFCHISSEAVIGDECSLTSHVVIMGKTMLGAKSKVFSHAVLGADPQNNKHKGGATILSIGKNCMIREGVTMHRGSDSSTGMTVVGDNCQFFCYAHIAHDCHVGNHVTFANNAMIAGHVTVGDYVIIGGGAAVHQFVRVGHHAFIGGVSALVGDLIPYGTAVGVQAKLAGLNIIGMKRAGLERQDIHALRHAVAMLFDHSKPFKERVNDVASCYSSSRSVADVVRFIKEEGKRFYCTPKFGGDRIK</sequence>
<accession>A9ISM8</accession>
<evidence type="ECO:0000255" key="1">
    <source>
        <dbReference type="HAMAP-Rule" id="MF_00387"/>
    </source>
</evidence>
<dbReference type="EC" id="2.3.1.129" evidence="1"/>
<dbReference type="EMBL" id="AM260525">
    <property type="protein sequence ID" value="CAK01319.1"/>
    <property type="molecule type" value="Genomic_DNA"/>
</dbReference>
<dbReference type="RefSeq" id="WP_012231509.1">
    <property type="nucleotide sequence ID" value="NC_010161.1"/>
</dbReference>
<dbReference type="SMR" id="A9ISM8"/>
<dbReference type="KEGG" id="btr:BT_0921"/>
<dbReference type="eggNOG" id="COG1043">
    <property type="taxonomic scope" value="Bacteria"/>
</dbReference>
<dbReference type="HOGENOM" id="CLU_061249_0_0_5"/>
<dbReference type="UniPathway" id="UPA00359">
    <property type="reaction ID" value="UER00477"/>
</dbReference>
<dbReference type="Proteomes" id="UP000001592">
    <property type="component" value="Chromosome"/>
</dbReference>
<dbReference type="GO" id="GO:0005737">
    <property type="term" value="C:cytoplasm"/>
    <property type="evidence" value="ECO:0007669"/>
    <property type="project" value="UniProtKB-SubCell"/>
</dbReference>
<dbReference type="GO" id="GO:0016020">
    <property type="term" value="C:membrane"/>
    <property type="evidence" value="ECO:0007669"/>
    <property type="project" value="GOC"/>
</dbReference>
<dbReference type="GO" id="GO:0008780">
    <property type="term" value="F:acyl-[acyl-carrier-protein]-UDP-N-acetylglucosamine O-acyltransferase activity"/>
    <property type="evidence" value="ECO:0007669"/>
    <property type="project" value="UniProtKB-UniRule"/>
</dbReference>
<dbReference type="GO" id="GO:0009245">
    <property type="term" value="P:lipid A biosynthetic process"/>
    <property type="evidence" value="ECO:0007669"/>
    <property type="project" value="UniProtKB-UniRule"/>
</dbReference>
<dbReference type="CDD" id="cd03351">
    <property type="entry name" value="LbH_UDP-GlcNAc_AT"/>
    <property type="match status" value="1"/>
</dbReference>
<dbReference type="Gene3D" id="2.160.10.10">
    <property type="entry name" value="Hexapeptide repeat proteins"/>
    <property type="match status" value="1"/>
</dbReference>
<dbReference type="Gene3D" id="1.20.1180.10">
    <property type="entry name" value="Udp N-acetylglucosamine O-acyltransferase, C-terminal domain"/>
    <property type="match status" value="1"/>
</dbReference>
<dbReference type="HAMAP" id="MF_00387">
    <property type="entry name" value="LpxA"/>
    <property type="match status" value="1"/>
</dbReference>
<dbReference type="InterPro" id="IPR029098">
    <property type="entry name" value="Acetyltransf_C"/>
</dbReference>
<dbReference type="InterPro" id="IPR037157">
    <property type="entry name" value="Acetyltransf_C_sf"/>
</dbReference>
<dbReference type="InterPro" id="IPR001451">
    <property type="entry name" value="Hexapep"/>
</dbReference>
<dbReference type="InterPro" id="IPR010137">
    <property type="entry name" value="Lipid_A_LpxA"/>
</dbReference>
<dbReference type="InterPro" id="IPR011004">
    <property type="entry name" value="Trimer_LpxA-like_sf"/>
</dbReference>
<dbReference type="NCBIfam" id="TIGR01852">
    <property type="entry name" value="lipid_A_lpxA"/>
    <property type="match status" value="1"/>
</dbReference>
<dbReference type="NCBIfam" id="NF003657">
    <property type="entry name" value="PRK05289.1"/>
    <property type="match status" value="1"/>
</dbReference>
<dbReference type="PANTHER" id="PTHR43480">
    <property type="entry name" value="ACYL-[ACYL-CARRIER-PROTEIN]--UDP-N-ACETYLGLUCOSAMINE O-ACYLTRANSFERASE"/>
    <property type="match status" value="1"/>
</dbReference>
<dbReference type="PANTHER" id="PTHR43480:SF1">
    <property type="entry name" value="ACYL-[ACYL-CARRIER-PROTEIN]--UDP-N-ACETYLGLUCOSAMINE O-ACYLTRANSFERASE, MITOCHONDRIAL-RELATED"/>
    <property type="match status" value="1"/>
</dbReference>
<dbReference type="Pfam" id="PF13720">
    <property type="entry name" value="Acetyltransf_11"/>
    <property type="match status" value="1"/>
</dbReference>
<dbReference type="Pfam" id="PF00132">
    <property type="entry name" value="Hexapep"/>
    <property type="match status" value="2"/>
</dbReference>
<dbReference type="PIRSF" id="PIRSF000456">
    <property type="entry name" value="UDP-GlcNAc_acltr"/>
    <property type="match status" value="1"/>
</dbReference>
<dbReference type="SUPFAM" id="SSF51161">
    <property type="entry name" value="Trimeric LpxA-like enzymes"/>
    <property type="match status" value="1"/>
</dbReference>
<dbReference type="PROSITE" id="PS00101">
    <property type="entry name" value="HEXAPEP_TRANSFERASES"/>
    <property type="match status" value="1"/>
</dbReference>
<name>LPXA_BART1</name>